<name>RL16_STRAW</name>
<protein>
    <recommendedName>
        <fullName evidence="1">Large ribosomal subunit protein uL16</fullName>
    </recommendedName>
    <alternativeName>
        <fullName evidence="3">50S ribosomal protein L16</fullName>
    </alternativeName>
</protein>
<keyword id="KW-1185">Reference proteome</keyword>
<keyword id="KW-0687">Ribonucleoprotein</keyword>
<keyword id="KW-0689">Ribosomal protein</keyword>
<keyword id="KW-0694">RNA-binding</keyword>
<keyword id="KW-0699">rRNA-binding</keyword>
<keyword id="KW-0820">tRNA-binding</keyword>
<gene>
    <name evidence="1" type="primary">rplP</name>
    <name type="ordered locus">SAV_4933</name>
</gene>
<evidence type="ECO:0000255" key="1">
    <source>
        <dbReference type="HAMAP-Rule" id="MF_01342"/>
    </source>
</evidence>
<evidence type="ECO:0000256" key="2">
    <source>
        <dbReference type="SAM" id="MobiDB-lite"/>
    </source>
</evidence>
<evidence type="ECO:0000305" key="3"/>
<comment type="function">
    <text evidence="1">Binds 23S rRNA and is also seen to make contacts with the A and possibly P site tRNAs.</text>
</comment>
<comment type="subunit">
    <text evidence="1">Part of the 50S ribosomal subunit.</text>
</comment>
<comment type="similarity">
    <text evidence="1">Belongs to the universal ribosomal protein uL16 family.</text>
</comment>
<sequence>MLIPRRVKHRKQHHPKRRGQAKGGTQVSFGEYGIQALTPAYVTNRQIEAARIAMTRHIKRGGKVWINIYPDRPLTKKPAETRMGSGKGSPEWWIANVHPGRVMFELSYPNEKIAREALTRAAHKLPMKCRIVKREAGEA</sequence>
<reference key="1">
    <citation type="journal article" date="2001" name="Proc. Natl. Acad. Sci. U.S.A.">
        <title>Genome sequence of an industrial microorganism Streptomyces avermitilis: deducing the ability of producing secondary metabolites.</title>
        <authorList>
            <person name="Omura S."/>
            <person name="Ikeda H."/>
            <person name="Ishikawa J."/>
            <person name="Hanamoto A."/>
            <person name="Takahashi C."/>
            <person name="Shinose M."/>
            <person name="Takahashi Y."/>
            <person name="Horikawa H."/>
            <person name="Nakazawa H."/>
            <person name="Osonoe T."/>
            <person name="Kikuchi H."/>
            <person name="Shiba T."/>
            <person name="Sakaki Y."/>
            <person name="Hattori M."/>
        </authorList>
    </citation>
    <scope>NUCLEOTIDE SEQUENCE [LARGE SCALE GENOMIC DNA]</scope>
    <source>
        <strain>ATCC 31267 / DSM 46492 / JCM 5070 / NBRC 14893 / NCIMB 12804 / NRRL 8165 / MA-4680</strain>
    </source>
</reference>
<reference key="2">
    <citation type="journal article" date="2003" name="Nat. Biotechnol.">
        <title>Complete genome sequence and comparative analysis of the industrial microorganism Streptomyces avermitilis.</title>
        <authorList>
            <person name="Ikeda H."/>
            <person name="Ishikawa J."/>
            <person name="Hanamoto A."/>
            <person name="Shinose M."/>
            <person name="Kikuchi H."/>
            <person name="Shiba T."/>
            <person name="Sakaki Y."/>
            <person name="Hattori M."/>
            <person name="Omura S."/>
        </authorList>
    </citation>
    <scope>NUCLEOTIDE SEQUENCE [LARGE SCALE GENOMIC DNA]</scope>
    <source>
        <strain>ATCC 31267 / DSM 46492 / JCM 5070 / NBRC 14893 / NCIMB 12804 / NRRL 8165 / MA-4680</strain>
    </source>
</reference>
<proteinExistence type="inferred from homology"/>
<organism>
    <name type="scientific">Streptomyces avermitilis (strain ATCC 31267 / DSM 46492 / JCM 5070 / NBRC 14893 / NCIMB 12804 / NRRL 8165 / MA-4680)</name>
    <dbReference type="NCBI Taxonomy" id="227882"/>
    <lineage>
        <taxon>Bacteria</taxon>
        <taxon>Bacillati</taxon>
        <taxon>Actinomycetota</taxon>
        <taxon>Actinomycetes</taxon>
        <taxon>Kitasatosporales</taxon>
        <taxon>Streptomycetaceae</taxon>
        <taxon>Streptomyces</taxon>
    </lineage>
</organism>
<feature type="chain" id="PRO_0000062226" description="Large ribosomal subunit protein uL16">
    <location>
        <begin position="1"/>
        <end position="139"/>
    </location>
</feature>
<feature type="region of interest" description="Disordered" evidence="2">
    <location>
        <begin position="1"/>
        <end position="25"/>
    </location>
</feature>
<feature type="compositionally biased region" description="Basic residues" evidence="2">
    <location>
        <begin position="1"/>
        <end position="20"/>
    </location>
</feature>
<accession>Q82DN8</accession>
<dbReference type="EMBL" id="BA000030">
    <property type="protein sequence ID" value="BAC72645.1"/>
    <property type="molecule type" value="Genomic_DNA"/>
</dbReference>
<dbReference type="RefSeq" id="WP_010986348.1">
    <property type="nucleotide sequence ID" value="NZ_JZJK01000077.1"/>
</dbReference>
<dbReference type="SMR" id="Q82DN8"/>
<dbReference type="GeneID" id="94000200"/>
<dbReference type="KEGG" id="sma:SAVERM_4933"/>
<dbReference type="eggNOG" id="COG0197">
    <property type="taxonomic scope" value="Bacteria"/>
</dbReference>
<dbReference type="HOGENOM" id="CLU_078858_2_1_11"/>
<dbReference type="OrthoDB" id="9802589at2"/>
<dbReference type="Proteomes" id="UP000000428">
    <property type="component" value="Chromosome"/>
</dbReference>
<dbReference type="GO" id="GO:0022625">
    <property type="term" value="C:cytosolic large ribosomal subunit"/>
    <property type="evidence" value="ECO:0007669"/>
    <property type="project" value="TreeGrafter"/>
</dbReference>
<dbReference type="GO" id="GO:0019843">
    <property type="term" value="F:rRNA binding"/>
    <property type="evidence" value="ECO:0007669"/>
    <property type="project" value="UniProtKB-UniRule"/>
</dbReference>
<dbReference type="GO" id="GO:0003735">
    <property type="term" value="F:structural constituent of ribosome"/>
    <property type="evidence" value="ECO:0007669"/>
    <property type="project" value="InterPro"/>
</dbReference>
<dbReference type="GO" id="GO:0000049">
    <property type="term" value="F:tRNA binding"/>
    <property type="evidence" value="ECO:0007669"/>
    <property type="project" value="UniProtKB-KW"/>
</dbReference>
<dbReference type="GO" id="GO:0006412">
    <property type="term" value="P:translation"/>
    <property type="evidence" value="ECO:0007669"/>
    <property type="project" value="UniProtKB-UniRule"/>
</dbReference>
<dbReference type="CDD" id="cd01433">
    <property type="entry name" value="Ribosomal_L16_L10e"/>
    <property type="match status" value="1"/>
</dbReference>
<dbReference type="FunFam" id="3.90.1170.10:FF:000001">
    <property type="entry name" value="50S ribosomal protein L16"/>
    <property type="match status" value="1"/>
</dbReference>
<dbReference type="Gene3D" id="3.90.1170.10">
    <property type="entry name" value="Ribosomal protein L10e/L16"/>
    <property type="match status" value="1"/>
</dbReference>
<dbReference type="HAMAP" id="MF_01342">
    <property type="entry name" value="Ribosomal_uL16"/>
    <property type="match status" value="1"/>
</dbReference>
<dbReference type="InterPro" id="IPR047873">
    <property type="entry name" value="Ribosomal_uL16"/>
</dbReference>
<dbReference type="InterPro" id="IPR000114">
    <property type="entry name" value="Ribosomal_uL16_bact-type"/>
</dbReference>
<dbReference type="InterPro" id="IPR020798">
    <property type="entry name" value="Ribosomal_uL16_CS"/>
</dbReference>
<dbReference type="InterPro" id="IPR016180">
    <property type="entry name" value="Ribosomal_uL16_dom"/>
</dbReference>
<dbReference type="InterPro" id="IPR036920">
    <property type="entry name" value="Ribosomal_uL16_sf"/>
</dbReference>
<dbReference type="NCBIfam" id="TIGR01164">
    <property type="entry name" value="rplP_bact"/>
    <property type="match status" value="1"/>
</dbReference>
<dbReference type="PANTHER" id="PTHR12220">
    <property type="entry name" value="50S/60S RIBOSOMAL PROTEIN L16"/>
    <property type="match status" value="1"/>
</dbReference>
<dbReference type="PANTHER" id="PTHR12220:SF13">
    <property type="entry name" value="LARGE RIBOSOMAL SUBUNIT PROTEIN UL16M"/>
    <property type="match status" value="1"/>
</dbReference>
<dbReference type="Pfam" id="PF00252">
    <property type="entry name" value="Ribosomal_L16"/>
    <property type="match status" value="1"/>
</dbReference>
<dbReference type="PRINTS" id="PR00060">
    <property type="entry name" value="RIBOSOMALL16"/>
</dbReference>
<dbReference type="SUPFAM" id="SSF54686">
    <property type="entry name" value="Ribosomal protein L16p/L10e"/>
    <property type="match status" value="1"/>
</dbReference>
<dbReference type="PROSITE" id="PS00586">
    <property type="entry name" value="RIBOSOMAL_L16_1"/>
    <property type="match status" value="1"/>
</dbReference>
<dbReference type="PROSITE" id="PS00701">
    <property type="entry name" value="RIBOSOMAL_L16_2"/>
    <property type="match status" value="1"/>
</dbReference>